<reference key="1">
    <citation type="submission" date="2006-10" db="EMBL/GenBank/DDBJ databases">
        <authorList>
            <consortium name="NIH - Xenopus Gene Collection (XGC) project"/>
        </authorList>
    </citation>
    <scope>NUCLEOTIDE SEQUENCE [LARGE SCALE MRNA]</scope>
    <source>
        <tissue>Testis</tissue>
    </source>
</reference>
<accession>A0JMR6</accession>
<feature type="chain" id="PRO_0000373926" description="Histone H2A deubiquitinase MYSM1">
    <location>
        <begin position="1"/>
        <end position="818"/>
    </location>
</feature>
<feature type="domain" description="SANT" evidence="3">
    <location>
        <begin position="107"/>
        <end position="158"/>
    </location>
</feature>
<feature type="domain" description="SWIRM" evidence="2">
    <location>
        <begin position="344"/>
        <end position="442"/>
    </location>
</feature>
<feature type="domain" description="MPN" evidence="4">
    <location>
        <begin position="548"/>
        <end position="680"/>
    </location>
</feature>
<feature type="short sequence motif" description="JAMM motif" evidence="4">
    <location>
        <begin position="627"/>
        <end position="640"/>
    </location>
</feature>
<feature type="short sequence motif" description="LXXLL motif">
    <location>
        <begin position="745"/>
        <end position="749"/>
    </location>
</feature>
<feature type="binding site" evidence="4">
    <location>
        <position position="627"/>
    </location>
    <ligand>
        <name>Zn(2+)</name>
        <dbReference type="ChEBI" id="CHEBI:29105"/>
        <note>catalytic</note>
    </ligand>
</feature>
<feature type="binding site" evidence="4">
    <location>
        <position position="629"/>
    </location>
    <ligand>
        <name>Zn(2+)</name>
        <dbReference type="ChEBI" id="CHEBI:29105"/>
        <note>catalytic</note>
    </ligand>
</feature>
<feature type="binding site" evidence="4">
    <location>
        <position position="640"/>
    </location>
    <ligand>
        <name>Zn(2+)</name>
        <dbReference type="ChEBI" id="CHEBI:29105"/>
        <note>catalytic</note>
    </ligand>
</feature>
<name>MYSM1_XENLA</name>
<organism>
    <name type="scientific">Xenopus laevis</name>
    <name type="common">African clawed frog</name>
    <dbReference type="NCBI Taxonomy" id="8355"/>
    <lineage>
        <taxon>Eukaryota</taxon>
        <taxon>Metazoa</taxon>
        <taxon>Chordata</taxon>
        <taxon>Craniata</taxon>
        <taxon>Vertebrata</taxon>
        <taxon>Euteleostomi</taxon>
        <taxon>Amphibia</taxon>
        <taxon>Batrachia</taxon>
        <taxon>Anura</taxon>
        <taxon>Pipoidea</taxon>
        <taxon>Pipidae</taxon>
        <taxon>Xenopodinae</taxon>
        <taxon>Xenopus</taxon>
        <taxon>Xenopus</taxon>
    </lineage>
</organism>
<keyword id="KW-0010">Activator</keyword>
<keyword id="KW-0156">Chromatin regulator</keyword>
<keyword id="KW-0238">DNA-binding</keyword>
<keyword id="KW-0378">Hydrolase</keyword>
<keyword id="KW-0479">Metal-binding</keyword>
<keyword id="KW-0482">Metalloprotease</keyword>
<keyword id="KW-0539">Nucleus</keyword>
<keyword id="KW-0645">Protease</keyword>
<keyword id="KW-1185">Reference proteome</keyword>
<keyword id="KW-0804">Transcription</keyword>
<keyword id="KW-0805">Transcription regulation</keyword>
<keyword id="KW-0833">Ubl conjugation pathway</keyword>
<keyword id="KW-0862">Zinc</keyword>
<evidence type="ECO:0000250" key="1"/>
<evidence type="ECO:0000255" key="2">
    <source>
        <dbReference type="PROSITE-ProRule" id="PRU00247"/>
    </source>
</evidence>
<evidence type="ECO:0000255" key="3">
    <source>
        <dbReference type="PROSITE-ProRule" id="PRU00624"/>
    </source>
</evidence>
<evidence type="ECO:0000255" key="4">
    <source>
        <dbReference type="PROSITE-ProRule" id="PRU01182"/>
    </source>
</evidence>
<evidence type="ECO:0000305" key="5"/>
<dbReference type="EC" id="3.4.19.-"/>
<dbReference type="EMBL" id="BC125979">
    <property type="protein sequence ID" value="AAI25980.1"/>
    <property type="molecule type" value="mRNA"/>
</dbReference>
<dbReference type="RefSeq" id="NP_001090503.1">
    <property type="nucleotide sequence ID" value="NM_001097034.1"/>
</dbReference>
<dbReference type="SMR" id="A0JMR6"/>
<dbReference type="MEROPS" id="M67.005"/>
<dbReference type="DNASU" id="779416"/>
<dbReference type="GeneID" id="779416"/>
<dbReference type="KEGG" id="xla:779416"/>
<dbReference type="AGR" id="Xenbase:XB-GENE-1032962"/>
<dbReference type="CTD" id="779416"/>
<dbReference type="Xenbase" id="XB-GENE-1032962">
    <property type="gene designation" value="mysm1.L"/>
</dbReference>
<dbReference type="OrthoDB" id="7464992at2759"/>
<dbReference type="Proteomes" id="UP000186698">
    <property type="component" value="Chromosome 4L"/>
</dbReference>
<dbReference type="Bgee" id="779416">
    <property type="expression patterns" value="Expressed in pancreas and 19 other cell types or tissues"/>
</dbReference>
<dbReference type="GO" id="GO:0070531">
    <property type="term" value="C:BRCA1-A complex"/>
    <property type="evidence" value="ECO:0000318"/>
    <property type="project" value="GO_Central"/>
</dbReference>
<dbReference type="GO" id="GO:0070552">
    <property type="term" value="C:BRISC complex"/>
    <property type="evidence" value="ECO:0000318"/>
    <property type="project" value="GO_Central"/>
</dbReference>
<dbReference type="GO" id="GO:0005634">
    <property type="term" value="C:nucleus"/>
    <property type="evidence" value="ECO:0000250"/>
    <property type="project" value="UniProtKB"/>
</dbReference>
<dbReference type="GO" id="GO:0003677">
    <property type="term" value="F:DNA binding"/>
    <property type="evidence" value="ECO:0007669"/>
    <property type="project" value="UniProtKB-KW"/>
</dbReference>
<dbReference type="GO" id="GO:0042393">
    <property type="term" value="F:histone binding"/>
    <property type="evidence" value="ECO:0000250"/>
    <property type="project" value="UniProtKB"/>
</dbReference>
<dbReference type="GO" id="GO:0140950">
    <property type="term" value="F:histone H2A deubiquitinase activity"/>
    <property type="evidence" value="ECO:0000250"/>
    <property type="project" value="UniProtKB"/>
</dbReference>
<dbReference type="GO" id="GO:0046872">
    <property type="term" value="F:metal ion binding"/>
    <property type="evidence" value="ECO:0007669"/>
    <property type="project" value="UniProtKB-KW"/>
</dbReference>
<dbReference type="GO" id="GO:0140492">
    <property type="term" value="F:metal-dependent deubiquitinase activity"/>
    <property type="evidence" value="ECO:0000250"/>
    <property type="project" value="UniProtKB"/>
</dbReference>
<dbReference type="GO" id="GO:0008237">
    <property type="term" value="F:metallopeptidase activity"/>
    <property type="evidence" value="ECO:0000318"/>
    <property type="project" value="GO_Central"/>
</dbReference>
<dbReference type="GO" id="GO:0031593">
    <property type="term" value="F:polyubiquitin modification-dependent protein binding"/>
    <property type="evidence" value="ECO:0000318"/>
    <property type="project" value="GO_Central"/>
</dbReference>
<dbReference type="GO" id="GO:0003713">
    <property type="term" value="F:transcription coactivator activity"/>
    <property type="evidence" value="ECO:0000250"/>
    <property type="project" value="UniProtKB"/>
</dbReference>
<dbReference type="GO" id="GO:0006338">
    <property type="term" value="P:chromatin remodeling"/>
    <property type="evidence" value="ECO:0000250"/>
    <property type="project" value="UniProtKB"/>
</dbReference>
<dbReference type="GO" id="GO:0006302">
    <property type="term" value="P:double-strand break repair"/>
    <property type="evidence" value="ECO:0000318"/>
    <property type="project" value="GO_Central"/>
</dbReference>
<dbReference type="GO" id="GO:0045944">
    <property type="term" value="P:positive regulation of transcription by RNA polymerase II"/>
    <property type="evidence" value="ECO:0000250"/>
    <property type="project" value="UniProtKB"/>
</dbReference>
<dbReference type="GO" id="GO:0006508">
    <property type="term" value="P:proteolysis"/>
    <property type="evidence" value="ECO:0007669"/>
    <property type="project" value="UniProtKB-KW"/>
</dbReference>
<dbReference type="CDD" id="cd08067">
    <property type="entry name" value="MPN_2A_DUB"/>
    <property type="match status" value="1"/>
</dbReference>
<dbReference type="CDD" id="cd00167">
    <property type="entry name" value="SANT"/>
    <property type="match status" value="1"/>
</dbReference>
<dbReference type="FunFam" id="1.10.10.10:FF:000193">
    <property type="entry name" value="histone H2A deubiquitinase MYSM1 isoform X1"/>
    <property type="match status" value="1"/>
</dbReference>
<dbReference type="FunFam" id="1.10.10.60:FF:000151">
    <property type="entry name" value="histone H2A deubiquitinase MYSM1 isoform X2"/>
    <property type="match status" value="1"/>
</dbReference>
<dbReference type="FunFam" id="3.40.140.10:FF:000018">
    <property type="entry name" value="histone H2A deubiquitinase MYSM1 isoform X2"/>
    <property type="match status" value="1"/>
</dbReference>
<dbReference type="Gene3D" id="3.40.140.10">
    <property type="entry name" value="Cytidine Deaminase, domain 2"/>
    <property type="match status" value="1"/>
</dbReference>
<dbReference type="Gene3D" id="1.10.10.60">
    <property type="entry name" value="Homeodomain-like"/>
    <property type="match status" value="1"/>
</dbReference>
<dbReference type="Gene3D" id="1.10.10.10">
    <property type="entry name" value="Winged helix-like DNA-binding domain superfamily/Winged helix DNA-binding domain"/>
    <property type="match status" value="1"/>
</dbReference>
<dbReference type="InterPro" id="IPR009057">
    <property type="entry name" value="Homeodomain-like_sf"/>
</dbReference>
<dbReference type="InterPro" id="IPR000555">
    <property type="entry name" value="JAMM/MPN+_dom"/>
</dbReference>
<dbReference type="InterPro" id="IPR050242">
    <property type="entry name" value="JAMM_MPN+_peptidase_M67A"/>
</dbReference>
<dbReference type="InterPro" id="IPR037518">
    <property type="entry name" value="MPN"/>
</dbReference>
<dbReference type="InterPro" id="IPR017930">
    <property type="entry name" value="Myb_dom"/>
</dbReference>
<dbReference type="InterPro" id="IPR001005">
    <property type="entry name" value="SANT/Myb"/>
</dbReference>
<dbReference type="InterPro" id="IPR017884">
    <property type="entry name" value="SANT_dom"/>
</dbReference>
<dbReference type="InterPro" id="IPR007526">
    <property type="entry name" value="SWIRM"/>
</dbReference>
<dbReference type="InterPro" id="IPR036388">
    <property type="entry name" value="WH-like_DNA-bd_sf"/>
</dbReference>
<dbReference type="PANTHER" id="PTHR10410">
    <property type="entry name" value="EUKARYOTIC TRANSLATION INITIATION FACTOR 3 -RELATED"/>
    <property type="match status" value="1"/>
</dbReference>
<dbReference type="Pfam" id="PF01398">
    <property type="entry name" value="JAB"/>
    <property type="match status" value="1"/>
</dbReference>
<dbReference type="Pfam" id="PF00249">
    <property type="entry name" value="Myb_DNA-binding"/>
    <property type="match status" value="1"/>
</dbReference>
<dbReference type="Pfam" id="PF04433">
    <property type="entry name" value="SWIRM"/>
    <property type="match status" value="1"/>
</dbReference>
<dbReference type="SMART" id="SM00232">
    <property type="entry name" value="JAB_MPN"/>
    <property type="match status" value="1"/>
</dbReference>
<dbReference type="SMART" id="SM00717">
    <property type="entry name" value="SANT"/>
    <property type="match status" value="1"/>
</dbReference>
<dbReference type="SUPFAM" id="SSF46689">
    <property type="entry name" value="Homeodomain-like"/>
    <property type="match status" value="2"/>
</dbReference>
<dbReference type="SUPFAM" id="SSF102712">
    <property type="entry name" value="JAB1/MPN domain"/>
    <property type="match status" value="1"/>
</dbReference>
<dbReference type="PROSITE" id="PS50249">
    <property type="entry name" value="MPN"/>
    <property type="match status" value="1"/>
</dbReference>
<dbReference type="PROSITE" id="PS51293">
    <property type="entry name" value="SANT"/>
    <property type="match status" value="1"/>
</dbReference>
<dbReference type="PROSITE" id="PS50934">
    <property type="entry name" value="SWIRM"/>
    <property type="match status" value="1"/>
</dbReference>
<proteinExistence type="evidence at transcript level"/>
<gene>
    <name type="primary">mysm1</name>
</gene>
<sequence length="818" mass="94084">MAEEAADVDIDIEGDINESSKSIYDSLNTGFAPEHYIESAWQNEEGLAPWALDSSISEENREAIKKMLLEEEYYLSNKPLAVKFWSDSQEGEKQCIKRVRSPAKASSSPVKWTKEEKNLFEQGLATFGRRWTSIARLIGSRSVLQVKNYARHYFKNKCKLEGFVKEEAKIGSLQIPNLQDYENEPDITDEPTTFRGRADPNLNAIKIEKLSDDEEIDITDEVDELLSNKTNLDTIIIAKTDKVKETKVETEVQQKSHSTTEHSQTDIPKLVLQQTETECLDSVNPLTCITSPKWTLSPQQCEEDDYDQPDVQDCLQEKCLSPHAEDLTVLCENENDSQDEDDEIKPPDQELEIDRNFILDEEKQAIPEFFEGRQAKTPDRYLRIRNYILDQWENCKPKYLNKTSVRPGLKNCGDVNCIGRIHTYLELIGAINFGCEQAIYNRPRPVDKTKCKEGKDTLEAYKLAHRLQSMRTRKRRVRDPWGNWCDAKDLEGQTYEHLSAEELARRHEDKIKSYKYSKGTRQVRSSFDPFQLIPCSAFSEEKKAPFQVKVSCEAMLVLDLHAHVSMAEVIGLLGGRYTESESVVEICAVEPCNSLSTGLQCEMDPVSQTQASEALASRGYSVIGWYHSHPAFDPNPSIRDIDTQAKYQNYFSRGGAKFLGMIISPYNRRNPHPQSQVACLIISDELSNDGSYRIPYKFEIEYMQGEPQWELVFAKTRWIIEKYRSSHSSVSMDKRFRHDSELTCLQKLLMCMKKTLGNTACPLITEEFLHRIEEYFRTSYKKESNYQIEDNDPCKQHSDTTFTMDSFQDYEPNGRPSL</sequence>
<protein>
    <recommendedName>
        <fullName>Histone H2A deubiquitinase MYSM1</fullName>
        <shortName>2A-DUB</shortName>
        <ecNumber>3.4.19.-</ecNumber>
    </recommendedName>
    <alternativeName>
        <fullName>Myb-like, SWIRM and MPN domain-containing protein 1</fullName>
    </alternativeName>
</protein>
<comment type="function">
    <text evidence="1">Metalloprotease that specifically deubiquitinates monoubiquitinated histone H2A, a specific tag for epigenetic transcriptional repression, thereby acting as a coactivator. Preferentially deubiquitinates monoubiquitinated H2A in hyperacetylated nucleosomes. Deubiquitination of histone H2A leads to facilitate the phosphorylation and dissociation of histone H1 from the nucleosome. Acts as a coactivator by participating in the initiation and elongation steps of androgen receptor (AR)-induced gene activation (By similarity).</text>
</comment>
<comment type="subcellular location">
    <subcellularLocation>
        <location evidence="3">Nucleus</location>
    </subcellularLocation>
</comment>
<comment type="domain">
    <text evidence="1">Binds double-stranded DNA via the SANT domain. The SWIRM domain does not bind double-stranded DNA (By similarity).</text>
</comment>
<comment type="similarity">
    <text evidence="5">Belongs to the peptidase M67A family. MYSM1 subfamily.</text>
</comment>